<protein>
    <recommendedName>
        <fullName>Cysteine synthase</fullName>
        <shortName>CSase</shortName>
        <ecNumber>2.5.1.47</ecNumber>
    </recommendedName>
    <alternativeName>
        <fullName>O-acetylserine (thiol)-lyase</fullName>
        <shortName>OAS-TL</shortName>
    </alternativeName>
    <alternativeName>
        <fullName>O-acetylserine sulfhydrylase</fullName>
    </alternativeName>
</protein>
<proteinExistence type="inferred from homology"/>
<comment type="catalytic activity">
    <reaction>
        <text>O-acetyl-L-serine + hydrogen sulfide = L-cysteine + acetate</text>
        <dbReference type="Rhea" id="RHEA:14829"/>
        <dbReference type="ChEBI" id="CHEBI:29919"/>
        <dbReference type="ChEBI" id="CHEBI:30089"/>
        <dbReference type="ChEBI" id="CHEBI:35235"/>
        <dbReference type="ChEBI" id="CHEBI:58340"/>
        <dbReference type="EC" id="2.5.1.47"/>
    </reaction>
</comment>
<comment type="cofactor">
    <cofactor evidence="1">
        <name>pyridoxal 5'-phosphate</name>
        <dbReference type="ChEBI" id="CHEBI:597326"/>
    </cofactor>
</comment>
<comment type="pathway">
    <text>Amino-acid biosynthesis; L-cysteine biosynthesis; L-cysteine from L-serine: step 2/2.</text>
</comment>
<comment type="subunit">
    <text evidence="1">Homodimer.</text>
</comment>
<comment type="similarity">
    <text evidence="2">Belongs to the cysteine synthase/cystathionine beta-synthase family.</text>
</comment>
<sequence>MAQKPVDNITQIIGGTPVVKLRNVVDDNAADVYVKLEYQNPGGSVKDRIALAMIEKAEREGKIKPGDTIVEPTSGNTGIGLAFVCAAKGYKAVFTMPETMSQERRNLLKAYGAELVLTPGSEAMKGAIKKAKELKEEHGYFEPQQFENPANPEVHELTTGPELLQQFEGKTIDAFLAGVGTGGTLSGVGKVLKKEYPNIEIVAIEPEASPVLSGGEPGPHKLQGLGAGFIPGTLNTEIYDSIIKVGNDTAMEMSRRVAKEEGILAGISSGAAIYAAIQKAKELGKGKTVVTVLPSNGERYLSTPLYSFDD</sequence>
<feature type="chain" id="PRO_0000167099" description="Cysteine synthase">
    <location>
        <begin position="1"/>
        <end position="310"/>
    </location>
</feature>
<feature type="binding site" evidence="1">
    <location>
        <position position="76"/>
    </location>
    <ligand>
        <name>pyridoxal 5'-phosphate</name>
        <dbReference type="ChEBI" id="CHEBI:597326"/>
    </ligand>
</feature>
<feature type="binding site" evidence="1">
    <location>
        <begin position="180"/>
        <end position="184"/>
    </location>
    <ligand>
        <name>pyridoxal 5'-phosphate</name>
        <dbReference type="ChEBI" id="CHEBI:597326"/>
    </ligand>
</feature>
<feature type="binding site" evidence="1">
    <location>
        <position position="268"/>
    </location>
    <ligand>
        <name>pyridoxal 5'-phosphate</name>
        <dbReference type="ChEBI" id="CHEBI:597326"/>
    </ligand>
</feature>
<feature type="modified residue" description="N6-(pyridoxal phosphate)lysine" evidence="1">
    <location>
        <position position="46"/>
    </location>
</feature>
<keyword id="KW-0028">Amino-acid biosynthesis</keyword>
<keyword id="KW-0198">Cysteine biosynthesis</keyword>
<keyword id="KW-0663">Pyridoxal phosphate</keyword>
<keyword id="KW-0808">Transferase</keyword>
<organism>
    <name type="scientific">Staphylococcus aureus (strain MSSA476)</name>
    <dbReference type="NCBI Taxonomy" id="282459"/>
    <lineage>
        <taxon>Bacteria</taxon>
        <taxon>Bacillati</taxon>
        <taxon>Bacillota</taxon>
        <taxon>Bacilli</taxon>
        <taxon>Bacillales</taxon>
        <taxon>Staphylococcaceae</taxon>
        <taxon>Staphylococcus</taxon>
    </lineage>
</organism>
<name>CYSK_STAAS</name>
<accession>Q6GBX5</accession>
<dbReference type="EC" id="2.5.1.47"/>
<dbReference type="EMBL" id="BX571857">
    <property type="protein sequence ID" value="CAG42245.1"/>
    <property type="molecule type" value="Genomic_DNA"/>
</dbReference>
<dbReference type="RefSeq" id="WP_000057594.1">
    <property type="nucleotide sequence ID" value="NC_002953.3"/>
</dbReference>
<dbReference type="SMR" id="Q6GBX5"/>
<dbReference type="KEGG" id="sas:SAS0470"/>
<dbReference type="HOGENOM" id="CLU_021018_1_0_9"/>
<dbReference type="UniPathway" id="UPA00136">
    <property type="reaction ID" value="UER00200"/>
</dbReference>
<dbReference type="GO" id="GO:0004124">
    <property type="term" value="F:cysteine synthase activity"/>
    <property type="evidence" value="ECO:0007669"/>
    <property type="project" value="UniProtKB-EC"/>
</dbReference>
<dbReference type="GO" id="GO:0006535">
    <property type="term" value="P:cysteine biosynthetic process from serine"/>
    <property type="evidence" value="ECO:0007669"/>
    <property type="project" value="InterPro"/>
</dbReference>
<dbReference type="CDD" id="cd01561">
    <property type="entry name" value="CBS_like"/>
    <property type="match status" value="1"/>
</dbReference>
<dbReference type="FunFam" id="3.40.50.1100:FF:000003">
    <property type="entry name" value="Cystathionine beta-synthase"/>
    <property type="match status" value="1"/>
</dbReference>
<dbReference type="FunFam" id="3.40.50.1100:FF:000118">
    <property type="entry name" value="Related to CYS4-cystathionine beta-synthase"/>
    <property type="match status" value="1"/>
</dbReference>
<dbReference type="Gene3D" id="3.40.50.1100">
    <property type="match status" value="2"/>
</dbReference>
<dbReference type="InterPro" id="IPR005856">
    <property type="entry name" value="Cys_synth"/>
</dbReference>
<dbReference type="InterPro" id="IPR050214">
    <property type="entry name" value="Cys_Synth/Cystath_Beta-Synth"/>
</dbReference>
<dbReference type="InterPro" id="IPR005859">
    <property type="entry name" value="CysK"/>
</dbReference>
<dbReference type="InterPro" id="IPR001216">
    <property type="entry name" value="P-phosphate_BS"/>
</dbReference>
<dbReference type="InterPro" id="IPR001926">
    <property type="entry name" value="TrpB-like_PALP"/>
</dbReference>
<dbReference type="InterPro" id="IPR036052">
    <property type="entry name" value="TrpB-like_PALP_sf"/>
</dbReference>
<dbReference type="NCBIfam" id="TIGR01139">
    <property type="entry name" value="cysK"/>
    <property type="match status" value="1"/>
</dbReference>
<dbReference type="NCBIfam" id="TIGR01136">
    <property type="entry name" value="cysKM"/>
    <property type="match status" value="1"/>
</dbReference>
<dbReference type="PANTHER" id="PTHR10314">
    <property type="entry name" value="CYSTATHIONINE BETA-SYNTHASE"/>
    <property type="match status" value="1"/>
</dbReference>
<dbReference type="Pfam" id="PF00291">
    <property type="entry name" value="PALP"/>
    <property type="match status" value="1"/>
</dbReference>
<dbReference type="SUPFAM" id="SSF53686">
    <property type="entry name" value="Tryptophan synthase beta subunit-like PLP-dependent enzymes"/>
    <property type="match status" value="1"/>
</dbReference>
<dbReference type="PROSITE" id="PS00901">
    <property type="entry name" value="CYS_SYNTHASE"/>
    <property type="match status" value="1"/>
</dbReference>
<evidence type="ECO:0000250" key="1"/>
<evidence type="ECO:0000305" key="2"/>
<gene>
    <name type="primary">cysK</name>
    <name type="ordered locus">SAS0470</name>
</gene>
<reference key="1">
    <citation type="journal article" date="2004" name="Proc. Natl. Acad. Sci. U.S.A.">
        <title>Complete genomes of two clinical Staphylococcus aureus strains: evidence for the rapid evolution of virulence and drug resistance.</title>
        <authorList>
            <person name="Holden M.T.G."/>
            <person name="Feil E.J."/>
            <person name="Lindsay J.A."/>
            <person name="Peacock S.J."/>
            <person name="Day N.P.J."/>
            <person name="Enright M.C."/>
            <person name="Foster T.J."/>
            <person name="Moore C.E."/>
            <person name="Hurst L."/>
            <person name="Atkin R."/>
            <person name="Barron A."/>
            <person name="Bason N."/>
            <person name="Bentley S.D."/>
            <person name="Chillingworth C."/>
            <person name="Chillingworth T."/>
            <person name="Churcher C."/>
            <person name="Clark L."/>
            <person name="Corton C."/>
            <person name="Cronin A."/>
            <person name="Doggett J."/>
            <person name="Dowd L."/>
            <person name="Feltwell T."/>
            <person name="Hance Z."/>
            <person name="Harris B."/>
            <person name="Hauser H."/>
            <person name="Holroyd S."/>
            <person name="Jagels K."/>
            <person name="James K.D."/>
            <person name="Lennard N."/>
            <person name="Line A."/>
            <person name="Mayes R."/>
            <person name="Moule S."/>
            <person name="Mungall K."/>
            <person name="Ormond D."/>
            <person name="Quail M.A."/>
            <person name="Rabbinowitsch E."/>
            <person name="Rutherford K.M."/>
            <person name="Sanders M."/>
            <person name="Sharp S."/>
            <person name="Simmonds M."/>
            <person name="Stevens K."/>
            <person name="Whitehead S."/>
            <person name="Barrell B.G."/>
            <person name="Spratt B.G."/>
            <person name="Parkhill J."/>
        </authorList>
    </citation>
    <scope>NUCLEOTIDE SEQUENCE [LARGE SCALE GENOMIC DNA]</scope>
    <source>
        <strain>MSSA476</strain>
    </source>
</reference>